<gene>
    <name evidence="1" type="primary">pheS</name>
    <name type="ordered locus">Erum1360</name>
    <name type="ordered locus">ERWE_CDS_01320</name>
</gene>
<name>SYFA_EHRRW</name>
<organism>
    <name type="scientific">Ehrlichia ruminantium (strain Welgevonden)</name>
    <dbReference type="NCBI Taxonomy" id="254945"/>
    <lineage>
        <taxon>Bacteria</taxon>
        <taxon>Pseudomonadati</taxon>
        <taxon>Pseudomonadota</taxon>
        <taxon>Alphaproteobacteria</taxon>
        <taxon>Rickettsiales</taxon>
        <taxon>Anaplasmataceae</taxon>
        <taxon>Ehrlichia</taxon>
    </lineage>
</organism>
<evidence type="ECO:0000255" key="1">
    <source>
        <dbReference type="HAMAP-Rule" id="MF_00281"/>
    </source>
</evidence>
<comment type="catalytic activity">
    <reaction evidence="1">
        <text>tRNA(Phe) + L-phenylalanine + ATP = L-phenylalanyl-tRNA(Phe) + AMP + diphosphate + H(+)</text>
        <dbReference type="Rhea" id="RHEA:19413"/>
        <dbReference type="Rhea" id="RHEA-COMP:9668"/>
        <dbReference type="Rhea" id="RHEA-COMP:9699"/>
        <dbReference type="ChEBI" id="CHEBI:15378"/>
        <dbReference type="ChEBI" id="CHEBI:30616"/>
        <dbReference type="ChEBI" id="CHEBI:33019"/>
        <dbReference type="ChEBI" id="CHEBI:58095"/>
        <dbReference type="ChEBI" id="CHEBI:78442"/>
        <dbReference type="ChEBI" id="CHEBI:78531"/>
        <dbReference type="ChEBI" id="CHEBI:456215"/>
        <dbReference type="EC" id="6.1.1.20"/>
    </reaction>
</comment>
<comment type="cofactor">
    <cofactor evidence="1">
        <name>Mg(2+)</name>
        <dbReference type="ChEBI" id="CHEBI:18420"/>
    </cofactor>
    <text evidence="1">Binds 2 magnesium ions per tetramer.</text>
</comment>
<comment type="subunit">
    <text evidence="1">Tetramer of two alpha and two beta subunits.</text>
</comment>
<comment type="subcellular location">
    <subcellularLocation>
        <location evidence="1">Cytoplasm</location>
    </subcellularLocation>
</comment>
<comment type="similarity">
    <text evidence="1">Belongs to the class-II aminoacyl-tRNA synthetase family. Phe-tRNA synthetase alpha subunit type 1 subfamily.</text>
</comment>
<reference key="1">
    <citation type="journal article" date="2005" name="Proc. Natl. Acad. Sci. U.S.A.">
        <title>The genome of the heartwater agent Ehrlichia ruminantium contains multiple tandem repeats of actively variable copy number.</title>
        <authorList>
            <person name="Collins N.E."/>
            <person name="Liebenberg J."/>
            <person name="de Villiers E.P."/>
            <person name="Brayton K.A."/>
            <person name="Louw E."/>
            <person name="Pretorius A."/>
            <person name="Faber F.E."/>
            <person name="van Heerden H."/>
            <person name="Josemans A."/>
            <person name="van Kleef M."/>
            <person name="Steyn H.C."/>
            <person name="van Strijp M.F."/>
            <person name="Zweygarth E."/>
            <person name="Jongejan F."/>
            <person name="Maillard J.C."/>
            <person name="Berthier D."/>
            <person name="Botha M."/>
            <person name="Joubert F."/>
            <person name="Corton C.H."/>
            <person name="Thomson N.R."/>
            <person name="Allsopp M.T."/>
            <person name="Allsopp B.A."/>
        </authorList>
    </citation>
    <scope>NUCLEOTIDE SEQUENCE [LARGE SCALE GENOMIC DNA]</scope>
    <source>
        <strain>Welgevonden</strain>
    </source>
</reference>
<reference key="2">
    <citation type="journal article" date="2006" name="J. Bacteriol.">
        <title>Comparative genomic analysis of three strains of Ehrlichia ruminantium reveals an active process of genome size plasticity.</title>
        <authorList>
            <person name="Frutos R."/>
            <person name="Viari A."/>
            <person name="Ferraz C."/>
            <person name="Morgat A."/>
            <person name="Eychenie S."/>
            <person name="Kandassamy Y."/>
            <person name="Chantal I."/>
            <person name="Bensaid A."/>
            <person name="Coissac E."/>
            <person name="Vachiery N."/>
            <person name="Demaille J."/>
            <person name="Martinez D."/>
        </authorList>
    </citation>
    <scope>NUCLEOTIDE SEQUENCE [LARGE SCALE GENOMIC DNA]</scope>
    <source>
        <strain>Welgevonden</strain>
    </source>
</reference>
<dbReference type="EC" id="6.1.1.20" evidence="1"/>
<dbReference type="EMBL" id="CR767821">
    <property type="protein sequence ID" value="CAH57852.1"/>
    <property type="molecule type" value="Genomic_DNA"/>
</dbReference>
<dbReference type="EMBL" id="CR925678">
    <property type="protein sequence ID" value="CAI26626.1"/>
    <property type="molecule type" value="Genomic_DNA"/>
</dbReference>
<dbReference type="RefSeq" id="WP_011154820.1">
    <property type="nucleotide sequence ID" value="NC_005295.2"/>
</dbReference>
<dbReference type="SMR" id="Q5HC40"/>
<dbReference type="GeneID" id="33057713"/>
<dbReference type="KEGG" id="eru:Erum1360"/>
<dbReference type="KEGG" id="erw:ERWE_CDS_01320"/>
<dbReference type="eggNOG" id="COG0016">
    <property type="taxonomic scope" value="Bacteria"/>
</dbReference>
<dbReference type="HOGENOM" id="CLU_025086_0_1_5"/>
<dbReference type="Proteomes" id="UP000001021">
    <property type="component" value="Chromosome"/>
</dbReference>
<dbReference type="GO" id="GO:0005737">
    <property type="term" value="C:cytoplasm"/>
    <property type="evidence" value="ECO:0007669"/>
    <property type="project" value="UniProtKB-SubCell"/>
</dbReference>
<dbReference type="GO" id="GO:0005524">
    <property type="term" value="F:ATP binding"/>
    <property type="evidence" value="ECO:0007669"/>
    <property type="project" value="UniProtKB-UniRule"/>
</dbReference>
<dbReference type="GO" id="GO:0000287">
    <property type="term" value="F:magnesium ion binding"/>
    <property type="evidence" value="ECO:0007669"/>
    <property type="project" value="UniProtKB-UniRule"/>
</dbReference>
<dbReference type="GO" id="GO:0004826">
    <property type="term" value="F:phenylalanine-tRNA ligase activity"/>
    <property type="evidence" value="ECO:0007669"/>
    <property type="project" value="UniProtKB-UniRule"/>
</dbReference>
<dbReference type="GO" id="GO:0000049">
    <property type="term" value="F:tRNA binding"/>
    <property type="evidence" value="ECO:0007669"/>
    <property type="project" value="InterPro"/>
</dbReference>
<dbReference type="GO" id="GO:0006432">
    <property type="term" value="P:phenylalanyl-tRNA aminoacylation"/>
    <property type="evidence" value="ECO:0007669"/>
    <property type="project" value="UniProtKB-UniRule"/>
</dbReference>
<dbReference type="CDD" id="cd00496">
    <property type="entry name" value="PheRS_alpha_core"/>
    <property type="match status" value="1"/>
</dbReference>
<dbReference type="Gene3D" id="3.30.930.10">
    <property type="entry name" value="Bira Bifunctional Protein, Domain 2"/>
    <property type="match status" value="1"/>
</dbReference>
<dbReference type="HAMAP" id="MF_00281">
    <property type="entry name" value="Phe_tRNA_synth_alpha1"/>
    <property type="match status" value="1"/>
</dbReference>
<dbReference type="InterPro" id="IPR006195">
    <property type="entry name" value="aa-tRNA-synth_II"/>
</dbReference>
<dbReference type="InterPro" id="IPR045864">
    <property type="entry name" value="aa-tRNA-synth_II/BPL/LPL"/>
</dbReference>
<dbReference type="InterPro" id="IPR004529">
    <property type="entry name" value="Phe-tRNA-synth_IIc_asu"/>
</dbReference>
<dbReference type="InterPro" id="IPR004188">
    <property type="entry name" value="Phe-tRNA_ligase_II_N"/>
</dbReference>
<dbReference type="InterPro" id="IPR022911">
    <property type="entry name" value="Phe_tRNA_ligase_alpha1_bac"/>
</dbReference>
<dbReference type="InterPro" id="IPR002319">
    <property type="entry name" value="Phenylalanyl-tRNA_Synthase"/>
</dbReference>
<dbReference type="InterPro" id="IPR010978">
    <property type="entry name" value="tRNA-bd_arm"/>
</dbReference>
<dbReference type="NCBIfam" id="TIGR00468">
    <property type="entry name" value="pheS"/>
    <property type="match status" value="1"/>
</dbReference>
<dbReference type="PANTHER" id="PTHR11538:SF41">
    <property type="entry name" value="PHENYLALANINE--TRNA LIGASE, MITOCHONDRIAL"/>
    <property type="match status" value="1"/>
</dbReference>
<dbReference type="PANTHER" id="PTHR11538">
    <property type="entry name" value="PHENYLALANYL-TRNA SYNTHETASE"/>
    <property type="match status" value="1"/>
</dbReference>
<dbReference type="Pfam" id="PF02912">
    <property type="entry name" value="Phe_tRNA-synt_N"/>
    <property type="match status" value="1"/>
</dbReference>
<dbReference type="Pfam" id="PF01409">
    <property type="entry name" value="tRNA-synt_2d"/>
    <property type="match status" value="1"/>
</dbReference>
<dbReference type="SUPFAM" id="SSF55681">
    <property type="entry name" value="Class II aaRS and biotin synthetases"/>
    <property type="match status" value="1"/>
</dbReference>
<dbReference type="SUPFAM" id="SSF46589">
    <property type="entry name" value="tRNA-binding arm"/>
    <property type="match status" value="1"/>
</dbReference>
<dbReference type="PROSITE" id="PS50862">
    <property type="entry name" value="AA_TRNA_LIGASE_II"/>
    <property type="match status" value="1"/>
</dbReference>
<sequence length="344" mass="40030">MLDNIHNLHKEATDKILSTSSLEELENIRSAYFGKSGFITVYLRNISTIKNLEERKSVGNVVNTIYSELKSLINSHRTKLHQIQIDNQLLQDKVDISLPIRPQKIGKLHPISNVLNEVKRIFLSLGFKLYDGPELEDEFHVFDALNTNKNHPAREENDTFYLKTLVNNKRVVLRTHTSSVQIRTMENNDGIYPIKVIAPGKVYRNDWDATHSPMFHQIEGLYIDKNINMGHLKYCINYFLNKFFGKNVQIRFRNSYFPFTEPSAEVDIKCNQNDWIEILGCGMVHSNVLTNVNIDPNQYSGFAFGIGIERITMLKYNISDLRKFYTNNLQWLDHYGFHFTHLTI</sequence>
<proteinExistence type="inferred from homology"/>
<accession>Q5HC40</accession>
<accession>Q5FCV1</accession>
<keyword id="KW-0030">Aminoacyl-tRNA synthetase</keyword>
<keyword id="KW-0067">ATP-binding</keyword>
<keyword id="KW-0963">Cytoplasm</keyword>
<keyword id="KW-0436">Ligase</keyword>
<keyword id="KW-0460">Magnesium</keyword>
<keyword id="KW-0479">Metal-binding</keyword>
<keyword id="KW-0547">Nucleotide-binding</keyword>
<keyword id="KW-0648">Protein biosynthesis</keyword>
<feature type="chain" id="PRO_0000231983" description="Phenylalanine--tRNA ligase alpha subunit">
    <location>
        <begin position="1"/>
        <end position="344"/>
    </location>
</feature>
<feature type="binding site" evidence="1">
    <location>
        <position position="261"/>
    </location>
    <ligand>
        <name>Mg(2+)</name>
        <dbReference type="ChEBI" id="CHEBI:18420"/>
        <note>shared with beta subunit</note>
    </ligand>
</feature>
<protein>
    <recommendedName>
        <fullName evidence="1">Phenylalanine--tRNA ligase alpha subunit</fullName>
        <ecNumber evidence="1">6.1.1.20</ecNumber>
    </recommendedName>
    <alternativeName>
        <fullName evidence="1">Phenylalanyl-tRNA synthetase alpha subunit</fullName>
        <shortName evidence="1">PheRS</shortName>
    </alternativeName>
</protein>